<proteinExistence type="inferred from homology"/>
<organism>
    <name type="scientific">Rhizopus delemar (strain RA 99-880 / ATCC MYA-4621 / FGSC 9543 / NRRL 43880)</name>
    <name type="common">Mucormycosis agent</name>
    <name type="synonym">Rhizopus arrhizus var. delemar</name>
    <dbReference type="NCBI Taxonomy" id="246409"/>
    <lineage>
        <taxon>Eukaryota</taxon>
        <taxon>Fungi</taxon>
        <taxon>Fungi incertae sedis</taxon>
        <taxon>Mucoromycota</taxon>
        <taxon>Mucoromycotina</taxon>
        <taxon>Mucoromycetes</taxon>
        <taxon>Mucorales</taxon>
        <taxon>Mucorineae</taxon>
        <taxon>Rhizopodaceae</taxon>
        <taxon>Rhizopus</taxon>
    </lineage>
</organism>
<dbReference type="EC" id="5.2.1.8" evidence="2"/>
<dbReference type="EMBL" id="CH476734">
    <property type="protein sequence ID" value="EIE79531.1"/>
    <property type="molecule type" value="Genomic_DNA"/>
</dbReference>
<dbReference type="SMR" id="P0C1J6"/>
<dbReference type="FunCoup" id="P0C1J6">
    <property type="interactions" value="56"/>
</dbReference>
<dbReference type="STRING" id="246409.P0C1J6"/>
<dbReference type="VEuPathDB" id="FungiDB:RO3G_04236"/>
<dbReference type="eggNOG" id="KOG0552">
    <property type="taxonomic scope" value="Eukaryota"/>
</dbReference>
<dbReference type="InParanoid" id="P0C1J6"/>
<dbReference type="OMA" id="TLVKIHY"/>
<dbReference type="OrthoDB" id="74740at4827"/>
<dbReference type="Proteomes" id="UP000009138">
    <property type="component" value="Unassembled WGS sequence"/>
</dbReference>
<dbReference type="GO" id="GO:0000785">
    <property type="term" value="C:chromatin"/>
    <property type="evidence" value="ECO:0007669"/>
    <property type="project" value="TreeGrafter"/>
</dbReference>
<dbReference type="GO" id="GO:0005730">
    <property type="term" value="C:nucleolus"/>
    <property type="evidence" value="ECO:0007669"/>
    <property type="project" value="TreeGrafter"/>
</dbReference>
<dbReference type="GO" id="GO:0003755">
    <property type="term" value="F:peptidyl-prolyl cis-trans isomerase activity"/>
    <property type="evidence" value="ECO:0007669"/>
    <property type="project" value="UniProtKB-KW"/>
</dbReference>
<dbReference type="FunFam" id="3.10.50.40:FF:000006">
    <property type="entry name" value="Peptidyl-prolyl cis-trans isomerase"/>
    <property type="match status" value="1"/>
</dbReference>
<dbReference type="Gene3D" id="3.10.50.40">
    <property type="match status" value="1"/>
</dbReference>
<dbReference type="Gene3D" id="2.60.120.340">
    <property type="entry name" value="Nucleoplasmin core domain"/>
    <property type="match status" value="1"/>
</dbReference>
<dbReference type="InterPro" id="IPR041232">
    <property type="entry name" value="NPL"/>
</dbReference>
<dbReference type="InterPro" id="IPR046357">
    <property type="entry name" value="PPIase_dom_sf"/>
</dbReference>
<dbReference type="InterPro" id="IPR001179">
    <property type="entry name" value="PPIase_FKBP_dom"/>
</dbReference>
<dbReference type="InterPro" id="IPR023566">
    <property type="entry name" value="PPIase_Fpr3/Fpr4-like"/>
</dbReference>
<dbReference type="PANTHER" id="PTHR43811:SF19">
    <property type="entry name" value="39 KDA FK506-BINDING NUCLEAR PROTEIN"/>
    <property type="match status" value="1"/>
</dbReference>
<dbReference type="PANTHER" id="PTHR43811">
    <property type="entry name" value="FKBP-TYPE PEPTIDYL-PROLYL CIS-TRANS ISOMERASE FKPA"/>
    <property type="match status" value="1"/>
</dbReference>
<dbReference type="Pfam" id="PF00254">
    <property type="entry name" value="FKBP_C"/>
    <property type="match status" value="1"/>
</dbReference>
<dbReference type="Pfam" id="PF17800">
    <property type="entry name" value="NPL"/>
    <property type="match status" value="1"/>
</dbReference>
<dbReference type="PIRSF" id="PIRSF001473">
    <property type="entry name" value="FK506-bp_FPR3"/>
    <property type="match status" value="1"/>
</dbReference>
<dbReference type="SUPFAM" id="SSF54534">
    <property type="entry name" value="FKBP-like"/>
    <property type="match status" value="1"/>
</dbReference>
<dbReference type="PROSITE" id="PS50059">
    <property type="entry name" value="FKBP_PPIASE"/>
    <property type="match status" value="1"/>
</dbReference>
<keyword id="KW-0143">Chaperone</keyword>
<keyword id="KW-0413">Isomerase</keyword>
<keyword id="KW-0539">Nucleus</keyword>
<keyword id="KW-1185">Reference proteome</keyword>
<keyword id="KW-0697">Rotamase</keyword>
<gene>
    <name type="primary">FKBP4</name>
    <name type="synonym">fpr4</name>
    <name type="ORF">RO3G_04236</name>
</gene>
<name>FKBP4_RHIO9</name>
<evidence type="ECO:0000250" key="1"/>
<evidence type="ECO:0000250" key="2">
    <source>
        <dbReference type="UniProtKB" id="Q06205"/>
    </source>
</evidence>
<evidence type="ECO:0000255" key="3">
    <source>
        <dbReference type="PROSITE-ProRule" id="PRU00277"/>
    </source>
</evidence>
<evidence type="ECO:0000256" key="4">
    <source>
        <dbReference type="SAM" id="MobiDB-lite"/>
    </source>
</evidence>
<evidence type="ECO:0000305" key="5"/>
<sequence>MSVQGFWGLQLVPGKTYSQVVSAPFRITMASLAADAEAGKRTSVSVLVDEKEFVLCTLVPNKIEQQPLDITFVEGEEVTFSAKGQNNIHLTGNYVFQDDEDDEMGASMIDSDEEDNVEDFLKKLPPNASKEDINKALLGLEVDEEIESDEEVESDEEIESDEEIESEEEEEEPVPVSKKRPAEEVKEIASKKQKAEKKEQPKKEKSKKEEPKKEEPKKEQPKKEEPKKKEEPKKKEEPKKKEEPKKKEEPKKKEEPKKKEEPKKKEEPKKKITKLPNGLIIEDIKMGEGASCKNGQRVGMRYIGKLTNGKVFDKNVSGKPFSFLLGRGEVIKGWDLGIAGMKAGGERKLTIPAPLAYGKRGAPPDIPKNATLVFDVKLLSMK</sequence>
<protein>
    <recommendedName>
        <fullName>FK506-binding protein 4</fullName>
        <ecNumber evidence="2">5.2.1.8</ecNumber>
    </recommendedName>
    <alternativeName>
        <fullName evidence="2">Histone proline isomerase</fullName>
    </alternativeName>
    <alternativeName>
        <fullName>Peptidyl-prolyl cis-trans isomerase</fullName>
        <shortName>PPIase</shortName>
    </alternativeName>
    <alternativeName>
        <fullName>Rotamase</fullName>
    </alternativeName>
</protein>
<accession>P0C1J6</accession>
<accession>I1BTK1</accession>
<reference key="1">
    <citation type="journal article" date="2009" name="PLoS Genet.">
        <title>Genomic analysis of the basal lineage fungus Rhizopus oryzae reveals a whole-genome duplication.</title>
        <authorList>
            <person name="Ma L.-J."/>
            <person name="Ibrahim A.S."/>
            <person name="Skory C."/>
            <person name="Grabherr M.G."/>
            <person name="Burger G."/>
            <person name="Butler M."/>
            <person name="Elias M."/>
            <person name="Idnurm A."/>
            <person name="Lang B.F."/>
            <person name="Sone T."/>
            <person name="Abe A."/>
            <person name="Calvo S.E."/>
            <person name="Corrochano L.M."/>
            <person name="Engels R."/>
            <person name="Fu J."/>
            <person name="Hansberg W."/>
            <person name="Kim J.-M."/>
            <person name="Kodira C.D."/>
            <person name="Koehrsen M.J."/>
            <person name="Liu B."/>
            <person name="Miranda-Saavedra D."/>
            <person name="O'Leary S."/>
            <person name="Ortiz-Castellanos L."/>
            <person name="Poulter R."/>
            <person name="Rodriguez-Romero J."/>
            <person name="Ruiz-Herrera J."/>
            <person name="Shen Y.-Q."/>
            <person name="Zeng Q."/>
            <person name="Galagan J."/>
            <person name="Birren B.W."/>
            <person name="Cuomo C.A."/>
            <person name="Wickes B.L."/>
        </authorList>
    </citation>
    <scope>NUCLEOTIDE SEQUENCE [LARGE SCALE GENOMIC DNA]</scope>
    <source>
        <strain>RA 99-880 / ATCC MYA-4621 / FGSC 9543 / NRRL 43880</strain>
    </source>
</reference>
<feature type="chain" id="PRO_0000244729" description="FK506-binding protein 4">
    <location>
        <begin position="1"/>
        <end position="382"/>
    </location>
</feature>
<feature type="domain" description="PPIase FKBP-type" evidence="3">
    <location>
        <begin position="295"/>
        <end position="382"/>
    </location>
</feature>
<feature type="region of interest" description="Disordered" evidence="4">
    <location>
        <begin position="139"/>
        <end position="274"/>
    </location>
</feature>
<feature type="compositionally biased region" description="Acidic residues" evidence="4">
    <location>
        <begin position="141"/>
        <end position="173"/>
    </location>
</feature>
<feature type="compositionally biased region" description="Basic and acidic residues" evidence="4">
    <location>
        <begin position="180"/>
        <end position="190"/>
    </location>
</feature>
<feature type="compositionally biased region" description="Basic and acidic residues" evidence="4">
    <location>
        <begin position="196"/>
        <end position="270"/>
    </location>
</feature>
<comment type="function">
    <text evidence="2">PPIase that acts as a histone chaperone. Histone proline isomerase that increases the rate of cis-trans isomerization at prolines on the histone H3 N-terminal tail. Proline isomerization influences H3 methylation thereby regulating gene expression.</text>
</comment>
<comment type="catalytic activity">
    <reaction evidence="2">
        <text>[protein]-peptidylproline (omega=180) = [protein]-peptidylproline (omega=0)</text>
        <dbReference type="Rhea" id="RHEA:16237"/>
        <dbReference type="Rhea" id="RHEA-COMP:10747"/>
        <dbReference type="Rhea" id="RHEA-COMP:10748"/>
        <dbReference type="ChEBI" id="CHEBI:83833"/>
        <dbReference type="ChEBI" id="CHEBI:83834"/>
        <dbReference type="EC" id="5.2.1.8"/>
    </reaction>
</comment>
<comment type="activity regulation">
    <text evidence="1">Inhibited by both FK506 and rapamycin.</text>
</comment>
<comment type="subunit">
    <text evidence="2">Binds to histones H3 and H4.</text>
</comment>
<comment type="subcellular location">
    <subcellularLocation>
        <location evidence="2">Nucleus</location>
    </subcellularLocation>
</comment>
<comment type="similarity">
    <text evidence="5">Belongs to the FKBP-type PPIase family. FKBP3/4 subfamily.</text>
</comment>